<accession>P19818</accession>
<reference key="1">
    <citation type="journal article" date="1985" name="FEBS Lett.">
        <title>Comparison of the predicted secondary structure of aphid transmission factor for transmissible and non-transmissible cauliflower mosaic virus strains.</title>
        <authorList>
            <person name="Modjtahedi N."/>
            <person name="Volovitch M."/>
            <person name="Mazzolini L."/>
            <person name="Yot P."/>
        </authorList>
    </citation>
    <scope>NUCLEOTIDE SEQUENCE [GENOMIC DNA]</scope>
</reference>
<feature type="chain" id="PRO_0000222071" description="Aphid transmission protein">
    <location>
        <begin position="1"/>
        <end position="159"/>
    </location>
</feature>
<evidence type="ECO:0000305" key="1"/>
<organism>
    <name type="scientific">Cauliflower mosaic virus (strain PV147)</name>
    <name type="common">CaMV</name>
    <dbReference type="NCBI Taxonomy" id="10647"/>
    <lineage>
        <taxon>Viruses</taxon>
        <taxon>Riboviria</taxon>
        <taxon>Pararnavirae</taxon>
        <taxon>Artverviricota</taxon>
        <taxon>Revtraviricetes</taxon>
        <taxon>Ortervirales</taxon>
        <taxon>Caulimoviridae</taxon>
        <taxon>Caulimovirus</taxon>
        <taxon>Caulimovirus tessellobrassicae</taxon>
    </lineage>
</organism>
<gene>
    <name type="ORF">ORF II</name>
</gene>
<protein>
    <recommendedName>
        <fullName>Aphid transmission protein</fullName>
    </recommendedName>
    <alternativeName>
        <fullName>Atf</fullName>
    </alternativeName>
    <alternativeName>
        <fullName>Protein 2</fullName>
    </alternativeName>
</protein>
<proteinExistence type="inferred from homology"/>
<comment type="function">
    <text>This protein is involved in virus transmission.</text>
</comment>
<comment type="similarity">
    <text evidence="1">Belongs to the caulimoviridae ORF II family.</text>
</comment>
<name>VAT_CAMVP</name>
<sequence>MSITGQPHVYKKDTIIRLKPLSLNSNNRSYVFSSSKGNIQNIINHLNNLNEIVGRSLLGIWRINSYFGLSKDPSESKSKNPSVFNTAKTIFKSGGVDYSSQLKEIKSLLEAQNTRIKNLENAIQSLDNKIQPEPLTKEEVKELKESINSIKEALKNIIG</sequence>
<organismHost>
    <name type="scientific">Arabidopsis thaliana</name>
    <name type="common">Mouse-ear cress</name>
    <dbReference type="NCBI Taxonomy" id="3702"/>
</organismHost>
<organismHost>
    <name type="scientific">Brassica</name>
    <dbReference type="NCBI Taxonomy" id="3705"/>
</organismHost>
<organismHost>
    <name type="scientific">Raphanus</name>
    <dbReference type="NCBI Taxonomy" id="3725"/>
</organismHost>
<dbReference type="EMBL" id="M37581">
    <property type="protein sequence ID" value="AAA96697.1"/>
    <property type="molecule type" value="Genomic_DNA"/>
</dbReference>
<dbReference type="SMR" id="P19818"/>
<dbReference type="InterPro" id="IPR004917">
    <property type="entry name" value="Caulimo_AT"/>
</dbReference>
<dbReference type="Pfam" id="PF03233">
    <property type="entry name" value="Cauli_AT"/>
    <property type="match status" value="1"/>
</dbReference>